<gene>
    <name evidence="1" type="primary">frdC</name>
    <name type="ordered locus">KPK_5117</name>
</gene>
<reference key="1">
    <citation type="journal article" date="2008" name="PLoS Genet.">
        <title>Complete genome sequence of the N2-fixing broad host range endophyte Klebsiella pneumoniae 342 and virulence predictions verified in mice.</title>
        <authorList>
            <person name="Fouts D.E."/>
            <person name="Tyler H.L."/>
            <person name="DeBoy R.T."/>
            <person name="Daugherty S."/>
            <person name="Ren Q."/>
            <person name="Badger J.H."/>
            <person name="Durkin A.S."/>
            <person name="Huot H."/>
            <person name="Shrivastava S."/>
            <person name="Kothari S."/>
            <person name="Dodson R.J."/>
            <person name="Mohamoud Y."/>
            <person name="Khouri H."/>
            <person name="Roesch L.F.W."/>
            <person name="Krogfelt K.A."/>
            <person name="Struve C."/>
            <person name="Triplett E.W."/>
            <person name="Methe B.A."/>
        </authorList>
    </citation>
    <scope>NUCLEOTIDE SEQUENCE [LARGE SCALE GENOMIC DNA]</scope>
    <source>
        <strain>342</strain>
    </source>
</reference>
<protein>
    <recommendedName>
        <fullName evidence="1">Fumarate reductase subunit C</fullName>
    </recommendedName>
    <alternativeName>
        <fullName evidence="1">Fumarate reductase 15 kDa hydrophobic protein</fullName>
    </alternativeName>
    <alternativeName>
        <fullName evidence="1">Quinol-fumarate reductase subunit C</fullName>
        <shortName evidence="1">QFR subunit C</shortName>
    </alternativeName>
</protein>
<feature type="chain" id="PRO_1000132378" description="Fumarate reductase subunit C">
    <location>
        <begin position="1"/>
        <end position="131"/>
    </location>
</feature>
<feature type="transmembrane region" description="Helical" evidence="1">
    <location>
        <begin position="30"/>
        <end position="50"/>
    </location>
</feature>
<feature type="transmembrane region" description="Helical" evidence="1">
    <location>
        <begin position="61"/>
        <end position="81"/>
    </location>
</feature>
<feature type="transmembrane region" description="Helical" evidence="1">
    <location>
        <begin position="110"/>
        <end position="130"/>
    </location>
</feature>
<proteinExistence type="inferred from homology"/>
<dbReference type="EMBL" id="CP000964">
    <property type="protein sequence ID" value="ACI09492.1"/>
    <property type="molecule type" value="Genomic_DNA"/>
</dbReference>
<dbReference type="SMR" id="B5Y348"/>
<dbReference type="KEGG" id="kpe:KPK_5117"/>
<dbReference type="HOGENOM" id="CLU_156492_0_0_6"/>
<dbReference type="Proteomes" id="UP000001734">
    <property type="component" value="Chromosome"/>
</dbReference>
<dbReference type="GO" id="GO:0045283">
    <property type="term" value="C:fumarate reductase complex"/>
    <property type="evidence" value="ECO:0007669"/>
    <property type="project" value="UniProtKB-UniRule"/>
</dbReference>
<dbReference type="GO" id="GO:0005886">
    <property type="term" value="C:plasma membrane"/>
    <property type="evidence" value="ECO:0007669"/>
    <property type="project" value="UniProtKB-SubCell"/>
</dbReference>
<dbReference type="GO" id="GO:0000104">
    <property type="term" value="F:succinate dehydrogenase activity"/>
    <property type="evidence" value="ECO:0007669"/>
    <property type="project" value="UniProtKB-UniRule"/>
</dbReference>
<dbReference type="CDD" id="cd00546">
    <property type="entry name" value="QFR_TypeD_subunitC"/>
    <property type="match status" value="1"/>
</dbReference>
<dbReference type="Gene3D" id="1.20.1300.10">
    <property type="entry name" value="Fumarate reductase/succinate dehydrogenase, transmembrane subunit"/>
    <property type="match status" value="1"/>
</dbReference>
<dbReference type="HAMAP" id="MF_00708">
    <property type="entry name" value="Fumarate_red_C"/>
    <property type="match status" value="1"/>
</dbReference>
<dbReference type="InterPro" id="IPR003510">
    <property type="entry name" value="Fumarate_red_C"/>
</dbReference>
<dbReference type="InterPro" id="IPR034804">
    <property type="entry name" value="SQR/QFR_C/D"/>
</dbReference>
<dbReference type="NCBIfam" id="NF003445">
    <property type="entry name" value="PRK04987.1"/>
    <property type="match status" value="1"/>
</dbReference>
<dbReference type="Pfam" id="PF02300">
    <property type="entry name" value="Fumarate_red_C"/>
    <property type="match status" value="1"/>
</dbReference>
<dbReference type="PIRSF" id="PIRSF000180">
    <property type="entry name" value="FrdC"/>
    <property type="match status" value="1"/>
</dbReference>
<dbReference type="SUPFAM" id="SSF81343">
    <property type="entry name" value="Fumarate reductase respiratory complex transmembrane subunits"/>
    <property type="match status" value="1"/>
</dbReference>
<organism>
    <name type="scientific">Klebsiella pneumoniae (strain 342)</name>
    <dbReference type="NCBI Taxonomy" id="507522"/>
    <lineage>
        <taxon>Bacteria</taxon>
        <taxon>Pseudomonadati</taxon>
        <taxon>Pseudomonadota</taxon>
        <taxon>Gammaproteobacteria</taxon>
        <taxon>Enterobacterales</taxon>
        <taxon>Enterobacteriaceae</taxon>
        <taxon>Klebsiella/Raoultella group</taxon>
        <taxon>Klebsiella</taxon>
        <taxon>Klebsiella pneumoniae complex</taxon>
    </lineage>
</organism>
<keyword id="KW-0997">Cell inner membrane</keyword>
<keyword id="KW-1003">Cell membrane</keyword>
<keyword id="KW-0472">Membrane</keyword>
<keyword id="KW-0812">Transmembrane</keyword>
<keyword id="KW-1133">Transmembrane helix</keyword>
<evidence type="ECO:0000255" key="1">
    <source>
        <dbReference type="HAMAP-Rule" id="MF_00708"/>
    </source>
</evidence>
<sequence length="131" mass="14884">MTTKRKPYVRPMTSTWWKKLPFYRFYMVREGTAVPTVWFSIVLIYGLFALKHGAESWAGYIGFLQNPVVVILNLITLAAALLHTKTWFELAPKAANVIIKGEKMGPEPVIKGLWVVTAVVTVVILFVALFW</sequence>
<name>FRDC_KLEP3</name>
<accession>B5Y348</accession>
<comment type="function">
    <text evidence="1">Two distinct, membrane-bound, FAD-containing enzymes are responsible for the catalysis of fumarate and succinate interconversion; fumarate reductase is used in anaerobic growth, and succinate dehydrogenase is used in aerobic growth. Anchors the catalytic components of the fumarate reductase complex to the cell inner membrane, binds quinones.</text>
</comment>
<comment type="subunit">
    <text evidence="1">Part of an enzyme complex containing four subunits: a flavoprotein (FrdA), an iron-sulfur protein (FrdB), and two hydrophobic anchor proteins (FrdC and FrdD).</text>
</comment>
<comment type="subcellular location">
    <subcellularLocation>
        <location evidence="1">Cell inner membrane</location>
        <topology evidence="1">Multi-pass membrane protein</topology>
    </subcellularLocation>
</comment>
<comment type="similarity">
    <text evidence="1">Belongs to the FrdC family.</text>
</comment>